<evidence type="ECO:0000250" key="1"/>
<evidence type="ECO:0000250" key="2">
    <source>
        <dbReference type="UniProtKB" id="Q8BHJ5"/>
    </source>
</evidence>
<evidence type="ECO:0000255" key="3">
    <source>
        <dbReference type="PROSITE-ProRule" id="PRU00126"/>
    </source>
</evidence>
<evidence type="ECO:0000256" key="4">
    <source>
        <dbReference type="SAM" id="MobiDB-lite"/>
    </source>
</evidence>
<evidence type="ECO:0000269" key="5">
    <source>
    </source>
</evidence>
<evidence type="ECO:0000269" key="6">
    <source>
    </source>
</evidence>
<evidence type="ECO:0000269" key="7">
    <source>
    </source>
</evidence>
<evidence type="ECO:0000269" key="8">
    <source>
    </source>
</evidence>
<evidence type="ECO:0000269" key="9">
    <source>
    </source>
</evidence>
<evidence type="ECO:0000269" key="10">
    <source>
    </source>
</evidence>
<evidence type="ECO:0000269" key="11">
    <source>
    </source>
</evidence>
<evidence type="ECO:0000269" key="12">
    <source>
    </source>
</evidence>
<evidence type="ECO:0000269" key="13">
    <source>
    </source>
</evidence>
<evidence type="ECO:0000305" key="14"/>
<evidence type="ECO:0007744" key="15">
    <source>
    </source>
</evidence>
<evidence type="ECO:0007744" key="16">
    <source>
    </source>
</evidence>
<evidence type="ECO:0007744" key="17">
    <source>
    </source>
</evidence>
<evidence type="ECO:0007744" key="18">
    <source>
    </source>
</evidence>
<evidence type="ECO:0007744" key="19">
    <source>
    </source>
</evidence>
<evidence type="ECO:0007829" key="20">
    <source>
        <dbReference type="PDB" id="4LG9"/>
    </source>
</evidence>
<gene>
    <name type="primary">TBL1XR1</name>
    <name type="synonym">IRA1</name>
    <name type="synonym">TBLR1</name>
</gene>
<keyword id="KW-0002">3D-structure</keyword>
<keyword id="KW-0007">Acetylation</keyword>
<keyword id="KW-0010">Activator</keyword>
<keyword id="KW-0156">Chromatin regulator</keyword>
<keyword id="KW-0225">Disease variant</keyword>
<keyword id="KW-0991">Intellectual disability</keyword>
<keyword id="KW-1017">Isopeptide bond</keyword>
<keyword id="KW-0539">Nucleus</keyword>
<keyword id="KW-0597">Phosphoprotein</keyword>
<keyword id="KW-1267">Proteomics identification</keyword>
<keyword id="KW-1185">Reference proteome</keyword>
<keyword id="KW-0677">Repeat</keyword>
<keyword id="KW-0678">Repressor</keyword>
<keyword id="KW-0804">Transcription</keyword>
<keyword id="KW-0805">Transcription regulation</keyword>
<keyword id="KW-0832">Ubl conjugation</keyword>
<keyword id="KW-0833">Ubl conjugation pathway</keyword>
<keyword id="KW-0853">WD repeat</keyword>
<accession>Q9BZK7</accession>
<accession>D3DNQ9</accession>
<accession>Q14DC3</accession>
<accession>Q9H2I1</accession>
<accession>Q9H9A1</accession>
<feature type="initiator methionine" description="Removed" evidence="16 17">
    <location>
        <position position="1"/>
    </location>
</feature>
<feature type="chain" id="PRO_0000051266" description="F-box-like/WD repeat-containing protein TBL1XR1">
    <location>
        <begin position="2"/>
        <end position="514"/>
    </location>
</feature>
<feature type="domain" description="LisH" evidence="3">
    <location>
        <begin position="4"/>
        <end position="36"/>
    </location>
</feature>
<feature type="domain" description="F-box-like">
    <location>
        <begin position="41"/>
        <end position="86"/>
    </location>
</feature>
<feature type="repeat" description="WD 1">
    <location>
        <begin position="167"/>
        <end position="206"/>
    </location>
</feature>
<feature type="repeat" description="WD 2">
    <location>
        <begin position="223"/>
        <end position="262"/>
    </location>
</feature>
<feature type="repeat" description="WD 3">
    <location>
        <begin position="264"/>
        <end position="303"/>
    </location>
</feature>
<feature type="repeat" description="WD 4">
    <location>
        <begin position="306"/>
        <end position="344"/>
    </location>
</feature>
<feature type="repeat" description="WD 5">
    <location>
        <begin position="347"/>
        <end position="386"/>
    </location>
</feature>
<feature type="repeat" description="WD 6">
    <location>
        <begin position="389"/>
        <end position="437"/>
    </location>
</feature>
<feature type="repeat" description="WD 7">
    <location>
        <begin position="440"/>
        <end position="479"/>
    </location>
</feature>
<feature type="repeat" description="WD 8">
    <location>
        <begin position="481"/>
        <end position="513"/>
    </location>
</feature>
<feature type="region of interest" description="Disordered" evidence="4">
    <location>
        <begin position="120"/>
        <end position="139"/>
    </location>
</feature>
<feature type="compositionally biased region" description="Low complexity" evidence="4">
    <location>
        <begin position="120"/>
        <end position="135"/>
    </location>
</feature>
<feature type="modified residue" description="N-acetylserine" evidence="16 17">
    <location>
        <position position="2"/>
    </location>
</feature>
<feature type="modified residue" description="N6-acetyllysine" evidence="2">
    <location>
        <position position="102"/>
    </location>
</feature>
<feature type="modified residue" description="Phosphoserine" evidence="15 18">
    <location>
        <position position="119"/>
    </location>
</feature>
<feature type="cross-link" description="Glycyl lysine isopeptide (Lys-Gly) (interchain with G-Cter in SUMO2)" evidence="19">
    <location>
        <position position="277"/>
    </location>
</feature>
<feature type="sequence variant" id="VAR_076753" description="In MRD41; dbSNP:rs786205859." evidence="10">
    <original>G</original>
    <variation>D</variation>
    <location>
        <position position="70"/>
    </location>
</feature>
<feature type="sequence variant" id="VAR_076754" description="In dbSNP:rs372813783." evidence="10">
    <original>A</original>
    <variation>S</variation>
    <location>
        <position position="116"/>
    </location>
</feature>
<feature type="sequence variant" id="VAR_076755" description="In MRD41; dbSNP:rs878854401." evidence="12">
    <original>Y</original>
    <variation>C</variation>
    <location>
        <position position="245"/>
    </location>
</feature>
<feature type="sequence variant" id="VAR_076756" description="In MRD41." evidence="8">
    <original>L</original>
    <variation>P</variation>
    <location>
        <position position="282"/>
    </location>
</feature>
<feature type="sequence variant" id="VAR_076757" description="Found in a patient with epilepsy; uncertain significance; dbSNP:rs747932785." evidence="10">
    <original>G</original>
    <variation>E</variation>
    <location>
        <position position="405"/>
    </location>
</feature>
<feature type="sequence variant" id="VAR_076758" description="Found in a patient with epilepsy; uncertain significance; dbSNP:rs781011308." evidence="10">
    <original>N</original>
    <variation>S</variation>
    <location>
        <position position="407"/>
    </location>
</feature>
<feature type="sequence variant" id="VAR_076759" description="In PRPTS; does not affect assembly into the N-Cor repressor complex; dbSNP:rs878854402." evidence="11">
    <original>Y</original>
    <variation>C</variation>
    <location>
        <position position="446"/>
    </location>
</feature>
<feature type="sequence conflict" description="In Ref. 2; AAG44736." evidence="14" ref="2">
    <original>E</original>
    <variation>K</variation>
    <location>
        <position position="31"/>
    </location>
</feature>
<feature type="sequence conflict" description="In Ref. 3; BAB14331." evidence="14" ref="3">
    <original>Y</original>
    <variation>H</variation>
    <location>
        <position position="59"/>
    </location>
</feature>
<feature type="sequence conflict" description="In Ref. 2; AAG44736." evidence="14" ref="2">
    <original>A</original>
    <variation>Q</variation>
    <location>
        <position position="389"/>
    </location>
</feature>
<feature type="helix" evidence="20">
    <location>
        <begin position="159"/>
        <end position="161"/>
    </location>
</feature>
<feature type="strand" evidence="20">
    <location>
        <begin position="162"/>
        <end position="165"/>
    </location>
</feature>
<feature type="strand" evidence="20">
    <location>
        <begin position="172"/>
        <end position="177"/>
    </location>
</feature>
<feature type="strand" evidence="20">
    <location>
        <begin position="179"/>
        <end position="188"/>
    </location>
</feature>
<feature type="strand" evidence="20">
    <location>
        <begin position="191"/>
        <end position="197"/>
    </location>
</feature>
<feature type="strand" evidence="20">
    <location>
        <begin position="208"/>
        <end position="212"/>
    </location>
</feature>
<feature type="strand" evidence="20">
    <location>
        <begin position="228"/>
        <end position="233"/>
    </location>
</feature>
<feature type="strand" evidence="20">
    <location>
        <begin position="237"/>
        <end position="244"/>
    </location>
</feature>
<feature type="strand" evidence="20">
    <location>
        <begin position="247"/>
        <end position="253"/>
    </location>
</feature>
<feature type="strand" evidence="20">
    <location>
        <begin position="258"/>
        <end position="264"/>
    </location>
</feature>
<feature type="strand" evidence="20">
    <location>
        <begin position="269"/>
        <end position="274"/>
    </location>
</feature>
<feature type="strand" evidence="20">
    <location>
        <begin position="276"/>
        <end position="285"/>
    </location>
</feature>
<feature type="strand" evidence="20">
    <location>
        <begin position="290"/>
        <end position="294"/>
    </location>
</feature>
<feature type="turn" evidence="20">
    <location>
        <begin position="295"/>
        <end position="298"/>
    </location>
</feature>
<feature type="strand" evidence="20">
    <location>
        <begin position="299"/>
        <end position="304"/>
    </location>
</feature>
<feature type="strand" evidence="20">
    <location>
        <begin position="311"/>
        <end position="326"/>
    </location>
</feature>
<feature type="strand" evidence="20">
    <location>
        <begin position="331"/>
        <end position="335"/>
    </location>
</feature>
<feature type="strand" evidence="20">
    <location>
        <begin position="342"/>
        <end position="345"/>
    </location>
</feature>
<feature type="strand" evidence="20">
    <location>
        <begin position="352"/>
        <end position="357"/>
    </location>
</feature>
<feature type="strand" evidence="20">
    <location>
        <begin position="361"/>
        <end position="368"/>
    </location>
</feature>
<feature type="strand" evidence="20">
    <location>
        <begin position="371"/>
        <end position="377"/>
    </location>
</feature>
<feature type="strand" evidence="20">
    <location>
        <begin position="384"/>
        <end position="388"/>
    </location>
</feature>
<feature type="strand" evidence="20">
    <location>
        <begin position="394"/>
        <end position="399"/>
    </location>
</feature>
<feature type="strand" evidence="20">
    <location>
        <begin position="406"/>
        <end position="408"/>
    </location>
</feature>
<feature type="strand" evidence="20">
    <location>
        <begin position="415"/>
        <end position="419"/>
    </location>
</feature>
<feature type="strand" evidence="20">
    <location>
        <begin position="424"/>
        <end position="428"/>
    </location>
</feature>
<feature type="turn" evidence="20">
    <location>
        <begin position="429"/>
        <end position="432"/>
    </location>
</feature>
<feature type="strand" evidence="20">
    <location>
        <begin position="433"/>
        <end position="438"/>
    </location>
</feature>
<feature type="strand" evidence="20">
    <location>
        <begin position="445"/>
        <end position="450"/>
    </location>
</feature>
<feature type="strand" evidence="20">
    <location>
        <begin position="454"/>
        <end position="461"/>
    </location>
</feature>
<feature type="strand" evidence="20">
    <location>
        <begin position="464"/>
        <end position="470"/>
    </location>
</feature>
<feature type="turn" evidence="20">
    <location>
        <begin position="471"/>
        <end position="473"/>
    </location>
</feature>
<feature type="strand" evidence="20">
    <location>
        <begin position="476"/>
        <end position="481"/>
    </location>
</feature>
<feature type="strand" evidence="20">
    <location>
        <begin position="486"/>
        <end position="491"/>
    </location>
</feature>
<feature type="strand" evidence="20">
    <location>
        <begin position="495"/>
        <end position="502"/>
    </location>
</feature>
<feature type="strand" evidence="20">
    <location>
        <begin position="507"/>
        <end position="511"/>
    </location>
</feature>
<dbReference type="EMBL" id="AF314544">
    <property type="protein sequence ID" value="AAK00301.1"/>
    <property type="molecule type" value="mRNA"/>
</dbReference>
<dbReference type="EMBL" id="AF268193">
    <property type="protein sequence ID" value="AAG44736.1"/>
    <property type="molecule type" value="mRNA"/>
</dbReference>
<dbReference type="EMBL" id="AK022956">
    <property type="protein sequence ID" value="BAB14331.1"/>
    <property type="molecule type" value="mRNA"/>
</dbReference>
<dbReference type="EMBL" id="CH471052">
    <property type="protein sequence ID" value="EAW78438.1"/>
    <property type="molecule type" value="Genomic_DNA"/>
</dbReference>
<dbReference type="EMBL" id="BC060320">
    <property type="protein sequence ID" value="AAH60320.1"/>
    <property type="status" value="ALT_SEQ"/>
    <property type="molecule type" value="mRNA"/>
</dbReference>
<dbReference type="EMBL" id="BC113421">
    <property type="protein sequence ID" value="AAI13422.1"/>
    <property type="molecule type" value="mRNA"/>
</dbReference>
<dbReference type="CCDS" id="CCDS46961.1"/>
<dbReference type="RefSeq" id="NP_001308122.1">
    <property type="nucleotide sequence ID" value="NM_001321193.3"/>
</dbReference>
<dbReference type="RefSeq" id="NP_001308123.1">
    <property type="nucleotide sequence ID" value="NM_001321194.3"/>
</dbReference>
<dbReference type="RefSeq" id="NP_001308124.1">
    <property type="nucleotide sequence ID" value="NM_001321195.1"/>
</dbReference>
<dbReference type="RefSeq" id="NP_001361256.1">
    <property type="nucleotide sequence ID" value="NM_001374327.1"/>
</dbReference>
<dbReference type="RefSeq" id="NP_001361257.1">
    <property type="nucleotide sequence ID" value="NM_001374328.1"/>
</dbReference>
<dbReference type="RefSeq" id="NP_001361258.1">
    <property type="nucleotide sequence ID" value="NM_001374329.1"/>
</dbReference>
<dbReference type="RefSeq" id="NP_078941.2">
    <property type="nucleotide sequence ID" value="NM_024665.5"/>
</dbReference>
<dbReference type="RefSeq" id="XP_005247832.1">
    <property type="nucleotide sequence ID" value="XM_005247775.2"/>
</dbReference>
<dbReference type="RefSeq" id="XP_006713809.1">
    <property type="nucleotide sequence ID" value="XM_006713746.1"/>
</dbReference>
<dbReference type="RefSeq" id="XP_011511443.1">
    <property type="nucleotide sequence ID" value="XM_011513141.1"/>
</dbReference>
<dbReference type="RefSeq" id="XP_011511444.1">
    <property type="nucleotide sequence ID" value="XM_011513142.3"/>
</dbReference>
<dbReference type="RefSeq" id="XP_011511445.1">
    <property type="nucleotide sequence ID" value="XM_011513143.2"/>
</dbReference>
<dbReference type="RefSeq" id="XP_016862674.1">
    <property type="nucleotide sequence ID" value="XM_017007185.1"/>
</dbReference>
<dbReference type="RefSeq" id="XP_047304900.1">
    <property type="nucleotide sequence ID" value="XM_047448944.1"/>
</dbReference>
<dbReference type="RefSeq" id="XP_047304901.1">
    <property type="nucleotide sequence ID" value="XM_047448945.1"/>
</dbReference>
<dbReference type="RefSeq" id="XP_047304902.1">
    <property type="nucleotide sequence ID" value="XM_047448946.1"/>
</dbReference>
<dbReference type="RefSeq" id="XP_047304903.1">
    <property type="nucleotide sequence ID" value="XM_047448947.1"/>
</dbReference>
<dbReference type="RefSeq" id="XP_047304905.1">
    <property type="nucleotide sequence ID" value="XM_047448949.1"/>
</dbReference>
<dbReference type="RefSeq" id="XP_054203865.1">
    <property type="nucleotide sequence ID" value="XM_054347890.1"/>
</dbReference>
<dbReference type="RefSeq" id="XP_054203866.1">
    <property type="nucleotide sequence ID" value="XM_054347891.1"/>
</dbReference>
<dbReference type="RefSeq" id="XP_054203867.1">
    <property type="nucleotide sequence ID" value="XM_054347892.1"/>
</dbReference>
<dbReference type="RefSeq" id="XP_054203868.1">
    <property type="nucleotide sequence ID" value="XM_054347893.1"/>
</dbReference>
<dbReference type="RefSeq" id="XP_054203869.1">
    <property type="nucleotide sequence ID" value="XM_054347894.1"/>
</dbReference>
<dbReference type="PDB" id="4LG9">
    <property type="method" value="X-ray"/>
    <property type="resolution" value="2.28 A"/>
    <property type="chains" value="A=134-514"/>
</dbReference>
<dbReference type="PDBsum" id="4LG9"/>
<dbReference type="SMR" id="Q9BZK7"/>
<dbReference type="BioGRID" id="122834">
    <property type="interactions" value="205"/>
</dbReference>
<dbReference type="CORUM" id="Q9BZK7"/>
<dbReference type="DIP" id="DIP-34582N"/>
<dbReference type="FunCoup" id="Q9BZK7">
    <property type="interactions" value="2824"/>
</dbReference>
<dbReference type="IntAct" id="Q9BZK7">
    <property type="interactions" value="83"/>
</dbReference>
<dbReference type="MINT" id="Q9BZK7"/>
<dbReference type="STRING" id="9606.ENSP00000405574"/>
<dbReference type="GlyGen" id="Q9BZK7">
    <property type="glycosylation" value="2 sites, 1 O-linked glycan (1 site)"/>
</dbReference>
<dbReference type="iPTMnet" id="Q9BZK7"/>
<dbReference type="PhosphoSitePlus" id="Q9BZK7"/>
<dbReference type="BioMuta" id="TBL1XR1"/>
<dbReference type="DMDM" id="23396874"/>
<dbReference type="jPOST" id="Q9BZK7"/>
<dbReference type="MassIVE" id="Q9BZK7"/>
<dbReference type="PaxDb" id="9606-ENSP00000405574"/>
<dbReference type="PeptideAtlas" id="Q9BZK7"/>
<dbReference type="ProteomicsDB" id="79864"/>
<dbReference type="Pumba" id="Q9BZK7"/>
<dbReference type="Antibodypedia" id="9317">
    <property type="antibodies" value="372 antibodies from 33 providers"/>
</dbReference>
<dbReference type="DNASU" id="79718"/>
<dbReference type="Ensembl" id="ENST00000352800.10">
    <property type="protein sequence ID" value="ENSP00000263964.11"/>
    <property type="gene ID" value="ENSG00000177565.19"/>
</dbReference>
<dbReference type="Ensembl" id="ENST00000422066.6">
    <property type="protein sequence ID" value="ENSP00000398477.2"/>
    <property type="gene ID" value="ENSG00000177565.19"/>
</dbReference>
<dbReference type="Ensembl" id="ENST00000422442.6">
    <property type="protein sequence ID" value="ENSP00000387849.3"/>
    <property type="gene ID" value="ENSG00000177565.19"/>
</dbReference>
<dbReference type="Ensembl" id="ENST00000430069.5">
    <property type="protein sequence ID" value="ENSP00000405574.1"/>
    <property type="gene ID" value="ENSG00000177565.19"/>
</dbReference>
<dbReference type="Ensembl" id="ENST00000457928.7">
    <property type="protein sequence ID" value="ENSP00000413251.3"/>
    <property type="gene ID" value="ENSG00000177565.19"/>
</dbReference>
<dbReference type="Ensembl" id="ENST00000673974.1">
    <property type="protein sequence ID" value="ENSP00000501274.1"/>
    <property type="gene ID" value="ENSG00000177565.19"/>
</dbReference>
<dbReference type="Ensembl" id="ENST00000704383.1">
    <property type="protein sequence ID" value="ENSP00000515885.1"/>
    <property type="gene ID" value="ENSG00000177565.19"/>
</dbReference>
<dbReference type="Ensembl" id="ENST00000704384.1">
    <property type="protein sequence ID" value="ENSP00000515886.1"/>
    <property type="gene ID" value="ENSG00000177565.19"/>
</dbReference>
<dbReference type="Ensembl" id="ENST00000704385.1">
    <property type="protein sequence ID" value="ENSP00000515887.1"/>
    <property type="gene ID" value="ENSG00000177565.19"/>
</dbReference>
<dbReference type="GeneID" id="79718"/>
<dbReference type="KEGG" id="hsa:79718"/>
<dbReference type="MANE-Select" id="ENST00000457928.7">
    <property type="protein sequence ID" value="ENSP00000413251.3"/>
    <property type="RefSeq nucleotide sequence ID" value="NM_024665.7"/>
    <property type="RefSeq protein sequence ID" value="NP_078941.2"/>
</dbReference>
<dbReference type="UCSC" id="uc003fiw.5">
    <property type="organism name" value="human"/>
</dbReference>
<dbReference type="AGR" id="HGNC:29529"/>
<dbReference type="CTD" id="79718"/>
<dbReference type="DisGeNET" id="79718"/>
<dbReference type="GeneCards" id="TBL1XR1"/>
<dbReference type="HGNC" id="HGNC:29529">
    <property type="gene designation" value="TBL1XR1"/>
</dbReference>
<dbReference type="HPA" id="ENSG00000177565">
    <property type="expression patterns" value="Low tissue specificity"/>
</dbReference>
<dbReference type="MalaCards" id="TBL1XR1"/>
<dbReference type="MIM" id="602342">
    <property type="type" value="phenotype"/>
</dbReference>
<dbReference type="MIM" id="608628">
    <property type="type" value="gene"/>
</dbReference>
<dbReference type="MIM" id="616944">
    <property type="type" value="phenotype"/>
</dbReference>
<dbReference type="neXtProt" id="NX_Q9BZK7"/>
<dbReference type="OpenTargets" id="ENSG00000177565"/>
<dbReference type="Orphanet" id="520">
    <property type="disease" value="Acute promyelocytic leukemia"/>
</dbReference>
<dbReference type="Orphanet" id="487825">
    <property type="disease" value="Pierpont syndrome"/>
</dbReference>
<dbReference type="PharmGKB" id="PA134928556"/>
<dbReference type="VEuPathDB" id="HostDB:ENSG00000177565"/>
<dbReference type="eggNOG" id="KOG0273">
    <property type="taxonomic scope" value="Eukaryota"/>
</dbReference>
<dbReference type="GeneTree" id="ENSGT00940000153421"/>
<dbReference type="HOGENOM" id="CLU_007609_2_0_1"/>
<dbReference type="InParanoid" id="Q9BZK7"/>
<dbReference type="OMA" id="QINIVSW"/>
<dbReference type="OrthoDB" id="1367865at2759"/>
<dbReference type="PAN-GO" id="Q9BZK7">
    <property type="GO annotations" value="4 GO annotations based on evolutionary models"/>
</dbReference>
<dbReference type="PhylomeDB" id="Q9BZK7"/>
<dbReference type="TreeFam" id="TF323190"/>
<dbReference type="PathwayCommons" id="Q9BZK7"/>
<dbReference type="Reactome" id="R-HSA-1368082">
    <property type="pathway name" value="RORA activates gene expression"/>
</dbReference>
<dbReference type="Reactome" id="R-HSA-1368108">
    <property type="pathway name" value="BMAL1:CLOCK,NPAS2 activates circadian gene expression"/>
</dbReference>
<dbReference type="Reactome" id="R-HSA-1989781">
    <property type="pathway name" value="PPARA activates gene expression"/>
</dbReference>
<dbReference type="Reactome" id="R-HSA-2122947">
    <property type="pathway name" value="NOTCH1 Intracellular Domain Regulates Transcription"/>
</dbReference>
<dbReference type="Reactome" id="R-HSA-2151201">
    <property type="pathway name" value="Transcriptional activation of mitochondrial biogenesis"/>
</dbReference>
<dbReference type="Reactome" id="R-HSA-2426168">
    <property type="pathway name" value="Activation of gene expression by SREBF (SREBP)"/>
</dbReference>
<dbReference type="Reactome" id="R-HSA-2644606">
    <property type="pathway name" value="Constitutive Signaling by NOTCH1 PEST Domain Mutants"/>
</dbReference>
<dbReference type="Reactome" id="R-HSA-2894862">
    <property type="pathway name" value="Constitutive Signaling by NOTCH1 HD+PEST Domain Mutants"/>
</dbReference>
<dbReference type="Reactome" id="R-HSA-3214815">
    <property type="pathway name" value="HDACs deacetylate histones"/>
</dbReference>
<dbReference type="Reactome" id="R-HSA-350054">
    <property type="pathway name" value="Notch-HLH transcription pathway"/>
</dbReference>
<dbReference type="Reactome" id="R-HSA-381340">
    <property type="pathway name" value="Transcriptional regulation of white adipocyte differentiation"/>
</dbReference>
<dbReference type="Reactome" id="R-HSA-400206">
    <property type="pathway name" value="Regulation of lipid metabolism by PPARalpha"/>
</dbReference>
<dbReference type="Reactome" id="R-HSA-400253">
    <property type="pathway name" value="Circadian Clock"/>
</dbReference>
<dbReference type="Reactome" id="R-HSA-9022537">
    <property type="pathway name" value="Loss of MECP2 binding ability to the NCoR/SMRT complex"/>
</dbReference>
<dbReference type="Reactome" id="R-HSA-9022692">
    <property type="pathway name" value="Regulation of MECP2 expression and activity"/>
</dbReference>
<dbReference type="Reactome" id="R-HSA-9029569">
    <property type="pathway name" value="NR1H3 &amp; NR1H2 regulate gene expression linked to cholesterol transport and efflux"/>
</dbReference>
<dbReference type="Reactome" id="R-HSA-9609690">
    <property type="pathway name" value="HCMV Early Events"/>
</dbReference>
<dbReference type="Reactome" id="R-HSA-9707564">
    <property type="pathway name" value="Cytoprotection by HMOX1"/>
</dbReference>
<dbReference type="Reactome" id="R-HSA-9707616">
    <property type="pathway name" value="Heme signaling"/>
</dbReference>
<dbReference type="Reactome" id="R-HSA-9841922">
    <property type="pathway name" value="MLL4 and MLL3 complexes regulate expression of PPARG target genes in adipogenesis and hepatic steatosis"/>
</dbReference>
<dbReference type="SignaLink" id="Q9BZK7"/>
<dbReference type="SIGNOR" id="Q9BZK7"/>
<dbReference type="BioGRID-ORCS" id="79718">
    <property type="hits" value="227 hits in 1173 CRISPR screens"/>
</dbReference>
<dbReference type="ChiTaRS" id="TBL1XR1">
    <property type="organism name" value="human"/>
</dbReference>
<dbReference type="EvolutionaryTrace" id="Q9BZK7"/>
<dbReference type="GeneWiki" id="TBL1XR1"/>
<dbReference type="GenomeRNAi" id="79718"/>
<dbReference type="Pharos" id="Q9BZK7">
    <property type="development level" value="Tbio"/>
</dbReference>
<dbReference type="PRO" id="PR:Q9BZK7"/>
<dbReference type="Proteomes" id="UP000005640">
    <property type="component" value="Chromosome 3"/>
</dbReference>
<dbReference type="RNAct" id="Q9BZK7">
    <property type="molecule type" value="protein"/>
</dbReference>
<dbReference type="Bgee" id="ENSG00000177565">
    <property type="expression patterns" value="Expressed in calcaneal tendon and 205 other cell types or tissues"/>
</dbReference>
<dbReference type="ExpressionAtlas" id="Q9BZK7">
    <property type="expression patterns" value="baseline and differential"/>
</dbReference>
<dbReference type="GO" id="GO:0000118">
    <property type="term" value="C:histone deacetylase complex"/>
    <property type="evidence" value="ECO:0000314"/>
    <property type="project" value="UniProtKB"/>
</dbReference>
<dbReference type="GO" id="GO:0072686">
    <property type="term" value="C:mitotic spindle"/>
    <property type="evidence" value="ECO:0000314"/>
    <property type="project" value="UniProtKB"/>
</dbReference>
<dbReference type="GO" id="GO:0005654">
    <property type="term" value="C:nucleoplasm"/>
    <property type="evidence" value="ECO:0000304"/>
    <property type="project" value="Reactome"/>
</dbReference>
<dbReference type="GO" id="GO:0005634">
    <property type="term" value="C:nucleus"/>
    <property type="evidence" value="ECO:0000314"/>
    <property type="project" value="UniProtKB"/>
</dbReference>
<dbReference type="GO" id="GO:0017053">
    <property type="term" value="C:transcription repressor complex"/>
    <property type="evidence" value="ECO:0000314"/>
    <property type="project" value="UniProtKB"/>
</dbReference>
<dbReference type="GO" id="GO:0008013">
    <property type="term" value="F:beta-catenin binding"/>
    <property type="evidence" value="ECO:0000353"/>
    <property type="project" value="UniProtKB"/>
</dbReference>
<dbReference type="GO" id="GO:0042393">
    <property type="term" value="F:histone binding"/>
    <property type="evidence" value="ECO:0000314"/>
    <property type="project" value="UniProtKB"/>
</dbReference>
<dbReference type="GO" id="GO:0000976">
    <property type="term" value="F:transcription cis-regulatory region binding"/>
    <property type="evidence" value="ECO:0000314"/>
    <property type="project" value="UniProtKB"/>
</dbReference>
<dbReference type="GO" id="GO:0003714">
    <property type="term" value="F:transcription corepressor activity"/>
    <property type="evidence" value="ECO:0000314"/>
    <property type="project" value="UniProtKB"/>
</dbReference>
<dbReference type="GO" id="GO:0001835">
    <property type="term" value="P:blastocyst hatching"/>
    <property type="evidence" value="ECO:0007669"/>
    <property type="project" value="Ensembl"/>
</dbReference>
<dbReference type="GO" id="GO:0006325">
    <property type="term" value="P:chromatin organization"/>
    <property type="evidence" value="ECO:0007669"/>
    <property type="project" value="UniProtKB-KW"/>
</dbReference>
<dbReference type="GO" id="GO:0060613">
    <property type="term" value="P:fat pad development"/>
    <property type="evidence" value="ECO:0007669"/>
    <property type="project" value="Ensembl"/>
</dbReference>
<dbReference type="GO" id="GO:0016042">
    <property type="term" value="P:lipid catabolic process"/>
    <property type="evidence" value="ECO:0007669"/>
    <property type="project" value="Ensembl"/>
</dbReference>
<dbReference type="GO" id="GO:0035264">
    <property type="term" value="P:multicellular organism growth"/>
    <property type="evidence" value="ECO:0007669"/>
    <property type="project" value="Ensembl"/>
</dbReference>
<dbReference type="GO" id="GO:0000122">
    <property type="term" value="P:negative regulation of transcription by RNA polymerase II"/>
    <property type="evidence" value="ECO:0000314"/>
    <property type="project" value="UniProtKB"/>
</dbReference>
<dbReference type="GO" id="GO:0090263">
    <property type="term" value="P:positive regulation of canonical Wnt signaling pathway"/>
    <property type="evidence" value="ECO:0000315"/>
    <property type="project" value="UniProtKB"/>
</dbReference>
<dbReference type="GO" id="GO:0045893">
    <property type="term" value="P:positive regulation of DNA-templated transcription"/>
    <property type="evidence" value="ECO:0000314"/>
    <property type="project" value="UniProtKB"/>
</dbReference>
<dbReference type="GO" id="GO:0045944">
    <property type="term" value="P:positive regulation of transcription by RNA polymerase II"/>
    <property type="evidence" value="ECO:0000314"/>
    <property type="project" value="UniProtKB"/>
</dbReference>
<dbReference type="GO" id="GO:0043161">
    <property type="term" value="P:proteasome-mediated ubiquitin-dependent protein catabolic process"/>
    <property type="evidence" value="ECO:0000250"/>
    <property type="project" value="UniProtKB"/>
</dbReference>
<dbReference type="GO" id="GO:0006357">
    <property type="term" value="P:regulation of transcription by RNA polymerase II"/>
    <property type="evidence" value="ECO:0000318"/>
    <property type="project" value="GO_Central"/>
</dbReference>
<dbReference type="GO" id="GO:0090207">
    <property type="term" value="P:regulation of triglyceride metabolic process"/>
    <property type="evidence" value="ECO:0007669"/>
    <property type="project" value="Ensembl"/>
</dbReference>
<dbReference type="GO" id="GO:0002021">
    <property type="term" value="P:response to dietary excess"/>
    <property type="evidence" value="ECO:0007669"/>
    <property type="project" value="Ensembl"/>
</dbReference>
<dbReference type="GO" id="GO:0050872">
    <property type="term" value="P:white fat cell differentiation"/>
    <property type="evidence" value="ECO:0007669"/>
    <property type="project" value="Ensembl"/>
</dbReference>
<dbReference type="CDD" id="cd00200">
    <property type="entry name" value="WD40"/>
    <property type="match status" value="1"/>
</dbReference>
<dbReference type="FunFam" id="1.20.960.30:FF:000001">
    <property type="entry name" value="F-box-like/WD repeat-containing protein TBL1XR1"/>
    <property type="match status" value="1"/>
</dbReference>
<dbReference type="FunFam" id="2.130.10.10:FF:002234">
    <property type="entry name" value="F-box-like/WD repeat-containing protein TBL1XR1"/>
    <property type="match status" value="1"/>
</dbReference>
<dbReference type="Gene3D" id="1.20.960.30">
    <property type="match status" value="1"/>
</dbReference>
<dbReference type="Gene3D" id="2.130.10.10">
    <property type="entry name" value="YVTN repeat-like/Quinoprotein amine dehydrogenase"/>
    <property type="match status" value="1"/>
</dbReference>
<dbReference type="InterPro" id="IPR045183">
    <property type="entry name" value="Ebi-like"/>
</dbReference>
<dbReference type="InterPro" id="IPR020472">
    <property type="entry name" value="G-protein_beta_WD-40_rep"/>
</dbReference>
<dbReference type="InterPro" id="IPR006594">
    <property type="entry name" value="LisH"/>
</dbReference>
<dbReference type="InterPro" id="IPR015943">
    <property type="entry name" value="WD40/YVTN_repeat-like_dom_sf"/>
</dbReference>
<dbReference type="InterPro" id="IPR019775">
    <property type="entry name" value="WD40_repeat_CS"/>
</dbReference>
<dbReference type="InterPro" id="IPR036322">
    <property type="entry name" value="WD40_repeat_dom_sf"/>
</dbReference>
<dbReference type="InterPro" id="IPR001680">
    <property type="entry name" value="WD40_rpt"/>
</dbReference>
<dbReference type="PANTHER" id="PTHR22846:SF40">
    <property type="entry name" value="F-BOX-LIKE_WD REPEAT-CONTAINING PROTEIN TBL1XR1"/>
    <property type="match status" value="1"/>
</dbReference>
<dbReference type="PANTHER" id="PTHR22846">
    <property type="entry name" value="WD40 REPEAT PROTEIN"/>
    <property type="match status" value="1"/>
</dbReference>
<dbReference type="Pfam" id="PF08513">
    <property type="entry name" value="LisH"/>
    <property type="match status" value="1"/>
</dbReference>
<dbReference type="Pfam" id="PF00400">
    <property type="entry name" value="WD40"/>
    <property type="match status" value="6"/>
</dbReference>
<dbReference type="PRINTS" id="PR00320">
    <property type="entry name" value="GPROTEINBRPT"/>
</dbReference>
<dbReference type="SMART" id="SM00667">
    <property type="entry name" value="LisH"/>
    <property type="match status" value="1"/>
</dbReference>
<dbReference type="SMART" id="SM00320">
    <property type="entry name" value="WD40"/>
    <property type="match status" value="8"/>
</dbReference>
<dbReference type="SUPFAM" id="SSF50978">
    <property type="entry name" value="WD40 repeat-like"/>
    <property type="match status" value="2"/>
</dbReference>
<dbReference type="PROSITE" id="PS50896">
    <property type="entry name" value="LISH"/>
    <property type="match status" value="1"/>
</dbReference>
<dbReference type="PROSITE" id="PS00678">
    <property type="entry name" value="WD_REPEATS_1"/>
    <property type="match status" value="4"/>
</dbReference>
<dbReference type="PROSITE" id="PS50082">
    <property type="entry name" value="WD_REPEATS_2"/>
    <property type="match status" value="6"/>
</dbReference>
<dbReference type="PROSITE" id="PS50294">
    <property type="entry name" value="WD_REPEATS_REGION"/>
    <property type="match status" value="1"/>
</dbReference>
<organism>
    <name type="scientific">Homo sapiens</name>
    <name type="common">Human</name>
    <dbReference type="NCBI Taxonomy" id="9606"/>
    <lineage>
        <taxon>Eukaryota</taxon>
        <taxon>Metazoa</taxon>
        <taxon>Chordata</taxon>
        <taxon>Craniata</taxon>
        <taxon>Vertebrata</taxon>
        <taxon>Euteleostomi</taxon>
        <taxon>Mammalia</taxon>
        <taxon>Eutheria</taxon>
        <taxon>Euarchontoglires</taxon>
        <taxon>Primates</taxon>
        <taxon>Haplorrhini</taxon>
        <taxon>Catarrhini</taxon>
        <taxon>Hominidae</taxon>
        <taxon>Homo</taxon>
    </lineage>
</organism>
<comment type="function">
    <text evidence="7">F-box-like protein involved in the recruitment of the ubiquitin/19S proteasome complex to nuclear receptor-regulated transcription units. Plays an essential role in transcription activation mediated by nuclear receptors. Probably acts as integral component of the N-Cor corepressor complex that mediates the recruitment of the 19S proteasome complex, leading to the subsequent proteasomal degradation of N-Cor complex, thereby allowing cofactor exchange, and transcription activation.</text>
</comment>
<comment type="subunit">
    <text evidence="2 5 6 13">Component of the N-Cor repressor complex, at least composed of NCOR1, NCOR2, HDAC3, TBL1X, TBL1XR1, CORO2A and GPS2 (PubMed:11931768). Probable component of some E3 ubiquitin ligase complex. Interacts with histones H2B and H4 (PubMed:12628926). Interacts with MECP2; bridges interaction between MECP2 and NCOR1 (By similarity). Interacts with USP44 (PubMed:27880911).</text>
</comment>
<comment type="interaction">
    <interactant intactId="EBI-765729">
        <id>Q9BZK7</id>
    </interactant>
    <interactant intactId="EBI-752365">
        <id>P36404</id>
        <label>ARL2</label>
    </interactant>
    <organismsDiffer>false</organismsDiffer>
    <experiments>4</experiments>
</comment>
<comment type="interaction">
    <interactant intactId="EBI-765729">
        <id>Q9BZK7</id>
    </interactant>
    <interactant intactId="EBI-930964">
        <id>P54253</id>
        <label>ATXN1</label>
    </interactant>
    <organismsDiffer>false</organismsDiffer>
    <experiments>6</experiments>
</comment>
<comment type="interaction">
    <interactant intactId="EBI-765729">
        <id>Q9BZK7</id>
    </interactant>
    <interactant intactId="EBI-395638">
        <id>O14645</id>
        <label>DNALI1</label>
    </interactant>
    <organismsDiffer>false</organismsDiffer>
    <experiments>3</experiments>
</comment>
<comment type="interaction">
    <interactant intactId="EBI-765729">
        <id>Q9BZK7</id>
    </interactant>
    <interactant intactId="EBI-948266">
        <id>O14901</id>
        <label>KLF11</label>
    </interactant>
    <organismsDiffer>false</organismsDiffer>
    <experiments>3</experiments>
</comment>
<comment type="interaction">
    <interactant intactId="EBI-765729">
        <id>Q9BZK7</id>
    </interactant>
    <interactant intactId="EBI-990792">
        <id>P00441</id>
        <label>SOD1</label>
    </interactant>
    <organismsDiffer>false</organismsDiffer>
    <experiments>3</experiments>
</comment>
<comment type="subcellular location">
    <subcellularLocation>
        <location evidence="14">Nucleus</location>
    </subcellularLocation>
</comment>
<comment type="tissue specificity">
    <text evidence="11">Widely expressed including the pituitary, hypothalamus, white and brown adipose tissue, muscle and liver.</text>
</comment>
<comment type="domain">
    <text evidence="1">The F-box-like domain is related to the F-box domain, and apparently displays the same function as component of ubiquitin E3 ligase complexes.</text>
</comment>
<comment type="disease" evidence="11">
    <disease id="DI-04736">
        <name>Pierpont syndrome</name>
        <acronym>PRPTS</acronym>
        <description>An autosomal dominant syndrome characterized by multiple congenital anomalies, global developmental delay, learning disability, palmar and plantar fat pads, and distinctive facial characteristics, especially when smiling.</description>
        <dbReference type="MIM" id="602342"/>
    </disease>
    <text>The disease is caused by variants affecting the gene represented in this entry.</text>
</comment>
<comment type="disease" evidence="8 9 10 12">
    <disease id="DI-04716">
        <name>Intellectual developmental disorder, autosomal dominant 41</name>
        <acronym>MRD41</acronym>
        <description>A disorder characterized by significantly below average general intellectual functioning associated with impairments in adaptive behavior and manifested during the developmental period. MRD41 patients manifest delayed psychomotor development, variable severity of intellectual disability, and delayed language. Non-specific dysmorphic features and autistic behavior is observed in some patients.</description>
        <dbReference type="MIM" id="616944"/>
    </disease>
    <text>The disease is caused by variants affecting the gene represented in this entry.</text>
</comment>
<comment type="similarity">
    <text evidence="14">Belongs to the WD repeat EBI family.</text>
</comment>
<comment type="sequence caution" evidence="14">
    <conflict type="miscellaneous discrepancy">
        <sequence resource="EMBL-CDS" id="AAH60320"/>
    </conflict>
    <text>Contaminating sequence. Potential poly-A sequence.</text>
</comment>
<reference key="1">
    <citation type="journal article" date="2002" name="Mol. Cell">
        <title>The N-CoR-HDAC3 nuclear receptor corepressor complex inhibits the JNK pathway through the integral subunit GPS2.</title>
        <authorList>
            <person name="Zhang J."/>
            <person name="Kalkum M."/>
            <person name="Chait B.T."/>
            <person name="Roeder R.G."/>
        </authorList>
    </citation>
    <scope>NUCLEOTIDE SEQUENCE [MRNA]</scope>
    <scope>IDENTIFICATION BY MASS SPECTROMETRY</scope>
    <scope>COMPONENT OF THE N-COR COMPLEX WITH NCOR1; NCOR2; GPS2; TBL1X AND HDAC3</scope>
</reference>
<reference key="2">
    <citation type="journal article" date="2000" name="Exp. Hematol.">
        <title>Identification of four human cDNAs that are differentially expressed by early hematopoietic progenitors.</title>
        <authorList>
            <person name="Zhang X."/>
            <person name="Dormady S.P."/>
            <person name="Basch R.S."/>
        </authorList>
    </citation>
    <scope>NUCLEOTIDE SEQUENCE [MRNA]</scope>
</reference>
<reference key="3">
    <citation type="journal article" date="2004" name="Nat. Genet.">
        <title>Complete sequencing and characterization of 21,243 full-length human cDNAs.</title>
        <authorList>
            <person name="Ota T."/>
            <person name="Suzuki Y."/>
            <person name="Nishikawa T."/>
            <person name="Otsuki T."/>
            <person name="Sugiyama T."/>
            <person name="Irie R."/>
            <person name="Wakamatsu A."/>
            <person name="Hayashi K."/>
            <person name="Sato H."/>
            <person name="Nagai K."/>
            <person name="Kimura K."/>
            <person name="Makita H."/>
            <person name="Sekine M."/>
            <person name="Obayashi M."/>
            <person name="Nishi T."/>
            <person name="Shibahara T."/>
            <person name="Tanaka T."/>
            <person name="Ishii S."/>
            <person name="Yamamoto J."/>
            <person name="Saito K."/>
            <person name="Kawai Y."/>
            <person name="Isono Y."/>
            <person name="Nakamura Y."/>
            <person name="Nagahari K."/>
            <person name="Murakami K."/>
            <person name="Yasuda T."/>
            <person name="Iwayanagi T."/>
            <person name="Wagatsuma M."/>
            <person name="Shiratori A."/>
            <person name="Sudo H."/>
            <person name="Hosoiri T."/>
            <person name="Kaku Y."/>
            <person name="Kodaira H."/>
            <person name="Kondo H."/>
            <person name="Sugawara M."/>
            <person name="Takahashi M."/>
            <person name="Kanda K."/>
            <person name="Yokoi T."/>
            <person name="Furuya T."/>
            <person name="Kikkawa E."/>
            <person name="Omura Y."/>
            <person name="Abe K."/>
            <person name="Kamihara K."/>
            <person name="Katsuta N."/>
            <person name="Sato K."/>
            <person name="Tanikawa M."/>
            <person name="Yamazaki M."/>
            <person name="Ninomiya K."/>
            <person name="Ishibashi T."/>
            <person name="Yamashita H."/>
            <person name="Murakawa K."/>
            <person name="Fujimori K."/>
            <person name="Tanai H."/>
            <person name="Kimata M."/>
            <person name="Watanabe M."/>
            <person name="Hiraoka S."/>
            <person name="Chiba Y."/>
            <person name="Ishida S."/>
            <person name="Ono Y."/>
            <person name="Takiguchi S."/>
            <person name="Watanabe S."/>
            <person name="Yosida M."/>
            <person name="Hotuta T."/>
            <person name="Kusano J."/>
            <person name="Kanehori K."/>
            <person name="Takahashi-Fujii A."/>
            <person name="Hara H."/>
            <person name="Tanase T.-O."/>
            <person name="Nomura Y."/>
            <person name="Togiya S."/>
            <person name="Komai F."/>
            <person name="Hara R."/>
            <person name="Takeuchi K."/>
            <person name="Arita M."/>
            <person name="Imose N."/>
            <person name="Musashino K."/>
            <person name="Yuuki H."/>
            <person name="Oshima A."/>
            <person name="Sasaki N."/>
            <person name="Aotsuka S."/>
            <person name="Yoshikawa Y."/>
            <person name="Matsunawa H."/>
            <person name="Ichihara T."/>
            <person name="Shiohata N."/>
            <person name="Sano S."/>
            <person name="Moriya S."/>
            <person name="Momiyama H."/>
            <person name="Satoh N."/>
            <person name="Takami S."/>
            <person name="Terashima Y."/>
            <person name="Suzuki O."/>
            <person name="Nakagawa S."/>
            <person name="Senoh A."/>
            <person name="Mizoguchi H."/>
            <person name="Goto Y."/>
            <person name="Shimizu F."/>
            <person name="Wakebe H."/>
            <person name="Hishigaki H."/>
            <person name="Watanabe T."/>
            <person name="Sugiyama A."/>
            <person name="Takemoto M."/>
            <person name="Kawakami B."/>
            <person name="Yamazaki M."/>
            <person name="Watanabe K."/>
            <person name="Kumagai A."/>
            <person name="Itakura S."/>
            <person name="Fukuzumi Y."/>
            <person name="Fujimori Y."/>
            <person name="Komiyama M."/>
            <person name="Tashiro H."/>
            <person name="Tanigami A."/>
            <person name="Fujiwara T."/>
            <person name="Ono T."/>
            <person name="Yamada K."/>
            <person name="Fujii Y."/>
            <person name="Ozaki K."/>
            <person name="Hirao M."/>
            <person name="Ohmori Y."/>
            <person name="Kawabata A."/>
            <person name="Hikiji T."/>
            <person name="Kobatake N."/>
            <person name="Inagaki H."/>
            <person name="Ikema Y."/>
            <person name="Okamoto S."/>
            <person name="Okitani R."/>
            <person name="Kawakami T."/>
            <person name="Noguchi S."/>
            <person name="Itoh T."/>
            <person name="Shigeta K."/>
            <person name="Senba T."/>
            <person name="Matsumura K."/>
            <person name="Nakajima Y."/>
            <person name="Mizuno T."/>
            <person name="Morinaga M."/>
            <person name="Sasaki M."/>
            <person name="Togashi T."/>
            <person name="Oyama M."/>
            <person name="Hata H."/>
            <person name="Watanabe M."/>
            <person name="Komatsu T."/>
            <person name="Mizushima-Sugano J."/>
            <person name="Satoh T."/>
            <person name="Shirai Y."/>
            <person name="Takahashi Y."/>
            <person name="Nakagawa K."/>
            <person name="Okumura K."/>
            <person name="Nagase T."/>
            <person name="Nomura N."/>
            <person name="Kikuchi H."/>
            <person name="Masuho Y."/>
            <person name="Yamashita R."/>
            <person name="Nakai K."/>
            <person name="Yada T."/>
            <person name="Nakamura Y."/>
            <person name="Ohara O."/>
            <person name="Isogai T."/>
            <person name="Sugano S."/>
        </authorList>
    </citation>
    <scope>NUCLEOTIDE SEQUENCE [LARGE SCALE MRNA]</scope>
</reference>
<reference key="4">
    <citation type="submission" date="2005-09" db="EMBL/GenBank/DDBJ databases">
        <authorList>
            <person name="Mural R.J."/>
            <person name="Istrail S."/>
            <person name="Sutton G.G."/>
            <person name="Florea L."/>
            <person name="Halpern A.L."/>
            <person name="Mobarry C.M."/>
            <person name="Lippert R."/>
            <person name="Walenz B."/>
            <person name="Shatkay H."/>
            <person name="Dew I."/>
            <person name="Miller J.R."/>
            <person name="Flanigan M.J."/>
            <person name="Edwards N.J."/>
            <person name="Bolanos R."/>
            <person name="Fasulo D."/>
            <person name="Halldorsson B.V."/>
            <person name="Hannenhalli S."/>
            <person name="Turner R."/>
            <person name="Yooseph S."/>
            <person name="Lu F."/>
            <person name="Nusskern D.R."/>
            <person name="Shue B.C."/>
            <person name="Zheng X.H."/>
            <person name="Zhong F."/>
            <person name="Delcher A.L."/>
            <person name="Huson D.H."/>
            <person name="Kravitz S.A."/>
            <person name="Mouchard L."/>
            <person name="Reinert K."/>
            <person name="Remington K.A."/>
            <person name="Clark A.G."/>
            <person name="Waterman M.S."/>
            <person name="Eichler E.E."/>
            <person name="Adams M.D."/>
            <person name="Hunkapiller M.W."/>
            <person name="Myers E.W."/>
            <person name="Venter J.C."/>
        </authorList>
    </citation>
    <scope>NUCLEOTIDE SEQUENCE [LARGE SCALE GENOMIC DNA]</scope>
</reference>
<reference key="5">
    <citation type="journal article" date="2004" name="Genome Res.">
        <title>The status, quality, and expansion of the NIH full-length cDNA project: the Mammalian Gene Collection (MGC).</title>
        <authorList>
            <consortium name="The MGC Project Team"/>
        </authorList>
    </citation>
    <scope>NUCLEOTIDE SEQUENCE [LARGE SCALE MRNA]</scope>
    <source>
        <tissue>Adrenal cortex</tissue>
        <tissue>Liver</tissue>
    </source>
</reference>
<reference key="6">
    <citation type="journal article" date="2003" name="EMBO J.">
        <title>Purification and functional characterization of the human N-CoR complex: the roles of HDAC3, TBL1 and TBLR1.</title>
        <authorList>
            <person name="Yoon H.-G."/>
            <person name="Chan D.W."/>
            <person name="Huang Z.-Q."/>
            <person name="Li J."/>
            <person name="Fondell J.D."/>
            <person name="Qin J."/>
            <person name="Wong J."/>
        </authorList>
    </citation>
    <scope>COMPONENT OF THE N-COR COMPLEX WITH TBL1X; CORO2A AND HDAC3</scope>
    <scope>HISTONE-BINDING</scope>
</reference>
<reference key="7">
    <citation type="journal article" date="2004" name="Cell">
        <title>A corepressor/coactivator exchange complex required for transcriptional activation by nuclear receptors and other regulated transcription factors.</title>
        <authorList>
            <person name="Perissi V."/>
            <person name="Aggarwal A."/>
            <person name="Glass C.K."/>
            <person name="Rose D.W."/>
            <person name="Rosenfeld M.G."/>
        </authorList>
    </citation>
    <scope>FUNCTION</scope>
    <scope>RECRUITMENT OF 19S PROTEASOME COMPLEX</scope>
</reference>
<reference key="8">
    <citation type="journal article" date="2007" name="Science">
        <title>ATM and ATR substrate analysis reveals extensive protein networks responsive to DNA damage.</title>
        <authorList>
            <person name="Matsuoka S."/>
            <person name="Ballif B.A."/>
            <person name="Smogorzewska A."/>
            <person name="McDonald E.R. III"/>
            <person name="Hurov K.E."/>
            <person name="Luo J."/>
            <person name="Bakalarski C.E."/>
            <person name="Zhao Z."/>
            <person name="Solimini N."/>
            <person name="Lerenthal Y."/>
            <person name="Shiloh Y."/>
            <person name="Gygi S.P."/>
            <person name="Elledge S.J."/>
        </authorList>
    </citation>
    <scope>IDENTIFICATION BY MASS SPECTROMETRY [LARGE SCALE ANALYSIS]</scope>
    <source>
        <tissue>Embryonic kidney</tissue>
    </source>
</reference>
<reference key="9">
    <citation type="journal article" date="2010" name="Sci. Signal.">
        <title>Quantitative phosphoproteomics reveals widespread full phosphorylation site occupancy during mitosis.</title>
        <authorList>
            <person name="Olsen J.V."/>
            <person name="Vermeulen M."/>
            <person name="Santamaria A."/>
            <person name="Kumar C."/>
            <person name="Miller M.L."/>
            <person name="Jensen L.J."/>
            <person name="Gnad F."/>
            <person name="Cox J."/>
            <person name="Jensen T.S."/>
            <person name="Nigg E.A."/>
            <person name="Brunak S."/>
            <person name="Mann M."/>
        </authorList>
    </citation>
    <scope>PHOSPHORYLATION [LARGE SCALE ANALYSIS] AT SER-119</scope>
    <scope>IDENTIFICATION BY MASS SPECTROMETRY [LARGE SCALE ANALYSIS]</scope>
    <source>
        <tissue>Cervix carcinoma</tissue>
    </source>
</reference>
<reference key="10">
    <citation type="journal article" date="2011" name="BMC Syst. Biol.">
        <title>Initial characterization of the human central proteome.</title>
        <authorList>
            <person name="Burkard T.R."/>
            <person name="Planyavsky M."/>
            <person name="Kaupe I."/>
            <person name="Breitwieser F.P."/>
            <person name="Buerckstuemmer T."/>
            <person name="Bennett K.L."/>
            <person name="Superti-Furga G."/>
            <person name="Colinge J."/>
        </authorList>
    </citation>
    <scope>IDENTIFICATION BY MASS SPECTROMETRY [LARGE SCALE ANALYSIS]</scope>
</reference>
<reference key="11">
    <citation type="journal article" date="2012" name="Mol. Cell. Proteomics">
        <title>Comparative large-scale characterisation of plant vs. mammal proteins reveals similar and idiosyncratic N-alpha acetylation features.</title>
        <authorList>
            <person name="Bienvenut W.V."/>
            <person name="Sumpton D."/>
            <person name="Martinez A."/>
            <person name="Lilla S."/>
            <person name="Espagne C."/>
            <person name="Meinnel T."/>
            <person name="Giglione C."/>
        </authorList>
    </citation>
    <scope>ACETYLATION [LARGE SCALE ANALYSIS] AT SER-2</scope>
    <scope>CLEAVAGE OF INITIATOR METHIONINE [LARGE SCALE ANALYSIS]</scope>
    <scope>IDENTIFICATION BY MASS SPECTROMETRY [LARGE SCALE ANALYSIS]</scope>
</reference>
<reference key="12">
    <citation type="journal article" date="2012" name="Nature">
        <title>Sporadic autism exomes reveal a highly interconnected protein network of de novo mutations.</title>
        <authorList>
            <person name="O'Roak B.J."/>
            <person name="Vives L."/>
            <person name="Girirajan S."/>
            <person name="Karakoc E."/>
            <person name="Krumm N."/>
            <person name="Coe B.P."/>
            <person name="Levy R."/>
            <person name="Ko A."/>
            <person name="Lee C."/>
            <person name="Smith J.D."/>
            <person name="Turner E.H."/>
            <person name="Stanaway I.B."/>
            <person name="Vernot B."/>
            <person name="Malig M."/>
            <person name="Baker C."/>
            <person name="Reilly B."/>
            <person name="Akey J.M."/>
            <person name="Borenstein E."/>
            <person name="Rieder M.J."/>
            <person name="Nickerson D.A."/>
            <person name="Bernier R."/>
            <person name="Shendure J."/>
            <person name="Eichler E.E."/>
        </authorList>
    </citation>
    <scope>INVOLVEMENT IN MRD41</scope>
    <scope>VARIANT MRD41 PRO-282</scope>
</reference>
<reference key="13">
    <citation type="journal article" date="2012" name="Proc. Natl. Acad. Sci. U.S.A.">
        <title>N-terminal acetylome analyses and functional insights of the N-terminal acetyltransferase NatB.</title>
        <authorList>
            <person name="Van Damme P."/>
            <person name="Lasa M."/>
            <person name="Polevoda B."/>
            <person name="Gazquez C."/>
            <person name="Elosegui-Artola A."/>
            <person name="Kim D.S."/>
            <person name="De Juan-Pardo E."/>
            <person name="Demeyer K."/>
            <person name="Hole K."/>
            <person name="Larrea E."/>
            <person name="Timmerman E."/>
            <person name="Prieto J."/>
            <person name="Arnesen T."/>
            <person name="Sherman F."/>
            <person name="Gevaert K."/>
            <person name="Aldabe R."/>
        </authorList>
    </citation>
    <scope>ACETYLATION [LARGE SCALE ANALYSIS] AT SER-2</scope>
    <scope>CLEAVAGE OF INITIATOR METHIONINE [LARGE SCALE ANALYSIS]</scope>
    <scope>IDENTIFICATION BY MASS SPECTROMETRY [LARGE SCALE ANALYSIS]</scope>
</reference>
<reference key="14">
    <citation type="journal article" date="2012" name="Science">
        <title>Multiplex targeted sequencing identifies recurrently mutated genes in autism spectrum disorders.</title>
        <authorList>
            <person name="O'Roak B.J."/>
            <person name="Vives L."/>
            <person name="Fu W."/>
            <person name="Egertson J.D."/>
            <person name="Stanaway I.B."/>
            <person name="Phelps I.G."/>
            <person name="Carvill G."/>
            <person name="Kumar A."/>
            <person name="Lee C."/>
            <person name="Ankenman K."/>
            <person name="Munson J."/>
            <person name="Hiatt J.B."/>
            <person name="Turner E.H."/>
            <person name="Levy R."/>
            <person name="O'Day D.R."/>
            <person name="Krumm N."/>
            <person name="Coe B.P."/>
            <person name="Martin B.K."/>
            <person name="Borenstein E."/>
            <person name="Nickerson D.A."/>
            <person name="Mefford H.C."/>
            <person name="Doherty D."/>
            <person name="Akey J.M."/>
            <person name="Bernier R."/>
            <person name="Eichler E.E."/>
            <person name="Shendure J."/>
        </authorList>
    </citation>
    <scope>INVOLVEMENT IN MRD41</scope>
</reference>
<reference key="15">
    <citation type="journal article" date="2013" name="J. Proteome Res.">
        <title>Toward a comprehensive characterization of a human cancer cell phosphoproteome.</title>
        <authorList>
            <person name="Zhou H."/>
            <person name="Di Palma S."/>
            <person name="Preisinger C."/>
            <person name="Peng M."/>
            <person name="Polat A.N."/>
            <person name="Heck A.J."/>
            <person name="Mohammed S."/>
        </authorList>
    </citation>
    <scope>PHOSPHORYLATION [LARGE SCALE ANALYSIS] AT SER-119</scope>
    <scope>IDENTIFICATION BY MASS SPECTROMETRY [LARGE SCALE ANALYSIS]</scope>
    <source>
        <tissue>Erythroleukemia</tissue>
    </source>
</reference>
<reference key="16">
    <citation type="journal article" date="2014" name="J. Hum. Genet.">
        <title>A girl with West syndrome and autistic features harboring a de novo TBL1XR1 mutation.</title>
        <authorList>
            <person name="Saitsu H."/>
            <person name="Tohyama J."/>
            <person name="Walsh T."/>
            <person name="Kato M."/>
            <person name="Kobayashi Y."/>
            <person name="Lee M."/>
            <person name="Tsurusaki Y."/>
            <person name="Miyake N."/>
            <person name="Goto Y."/>
            <person name="Nishino I."/>
            <person name="Ohtake A."/>
            <person name="King M.C."/>
            <person name="Matsumoto N."/>
        </authorList>
    </citation>
    <scope>INVOLVEMENT IN MRD41</scope>
    <scope>VARIANT MRD41 ASP-70</scope>
    <scope>VARIANTS SER-116; GLU-405 AND SER-407</scope>
</reference>
<reference key="17">
    <citation type="journal article" date="2016" name="Am. J. Med. Genet. A">
        <title>Syndrome disintegration: Exome sequencing reveals that Fitzsimmons syndrome is a co-occurrence of multiple events.</title>
        <authorList>
            <consortium name="FORGE Canada Consortium"/>
            <person name="Armour C.M."/>
            <person name="Smith A."/>
            <person name="Hartley T."/>
            <person name="Chardon J.W."/>
            <person name="Sawyer S."/>
            <person name="Schwartzentruber J."/>
            <person name="Hennekam R."/>
            <person name="Majewski J."/>
            <person name="Bulman D.E."/>
            <person name="Suri M."/>
            <person name="Boycott K.M."/>
        </authorList>
    </citation>
    <scope>INVOLVEMENT IN MRD41</scope>
    <scope>VARIANT MRD41 CYS-245</scope>
</reference>
<reference key="18">
    <citation type="journal article" date="2016" name="Cell Rep.">
        <title>USP44 Is an Integral Component of N-CoR that Contributes to Gene Repression by Deubiquitinating Histone H2B.</title>
        <authorList>
            <person name="Lan X."/>
            <person name="Atanassov B.S."/>
            <person name="Li W."/>
            <person name="Zhang Y."/>
            <person name="Florens L."/>
            <person name="Mohan R.D."/>
            <person name="Galardy P.J."/>
            <person name="Washburn M.P."/>
            <person name="Workman J.L."/>
            <person name="Dent S.Y.R."/>
        </authorList>
    </citation>
    <scope>INTERACTION WITH USP44</scope>
</reference>
<reference key="19">
    <citation type="journal article" date="2016" name="J. Med. Genet.">
        <title>A specific mutation in TBL1XR1 causes Pierpont syndrome.</title>
        <authorList>
            <person name="Heinen C.A."/>
            <person name="Jongejan A."/>
            <person name="Watson P.J."/>
            <person name="Redeker B."/>
            <person name="Boelen A."/>
            <person name="Boudzovitch-Surovtseva O."/>
            <person name="Forzano F."/>
            <person name="Hordijk R."/>
            <person name="Kelley R."/>
            <person name="Olney A.H."/>
            <person name="Pierpont M.E."/>
            <person name="Schaefer G.B."/>
            <person name="Stewart F."/>
            <person name="van Trotsenburg A.S."/>
            <person name="Fliers E."/>
            <person name="Schwabe J.W."/>
            <person name="Hennekam R.C."/>
        </authorList>
    </citation>
    <scope>TISSUE SPECIFICITY</scope>
    <scope>INVOLVEMENT IN PRPTS</scope>
    <scope>VARIANT PRPTS CYS-446</scope>
    <scope>CHARACTERIZATION OF VARIANT PRPTS CYS-446</scope>
</reference>
<reference key="20">
    <citation type="journal article" date="2016" name="J. Med. Genet.">
        <authorList>
            <person name="Heinen C.A."/>
            <person name="Jongejan A."/>
            <person name="Watson P.J."/>
            <person name="Redeker B."/>
            <person name="Boelen A."/>
            <person name="Boudzovitch-Surovtseva O."/>
            <person name="Forzano F."/>
            <person name="Hordijk R."/>
            <person name="Kelley R."/>
            <person name="Olney A.H."/>
            <person name="Pierpont M.E."/>
            <person name="Schaefer G.B."/>
            <person name="Stewart F."/>
            <person name="van Trotsenburg A.S."/>
            <person name="Fliers E."/>
            <person name="Schwabe J.W."/>
            <person name="Hennekam R.C."/>
        </authorList>
    </citation>
    <scope>ERRATUM OF PUBMED:26769062</scope>
</reference>
<reference key="21">
    <citation type="journal article" date="2017" name="Nat. Struct. Mol. Biol.">
        <title>Site-specific mapping of the human SUMO proteome reveals co-modification with phosphorylation.</title>
        <authorList>
            <person name="Hendriks I.A."/>
            <person name="Lyon D."/>
            <person name="Young C."/>
            <person name="Jensen L.J."/>
            <person name="Vertegaal A.C."/>
            <person name="Nielsen M.L."/>
        </authorList>
    </citation>
    <scope>SUMOYLATION [LARGE SCALE ANALYSIS] AT LYS-277</scope>
    <scope>IDENTIFICATION BY MASS SPECTROMETRY [LARGE SCALE ANALYSIS]</scope>
</reference>
<sequence>MSISSDEVNFLVYRYLQESGFSHSAFTFGIESHISQSNINGALVPPAALISIIQKGLQYVEAEVSINEDGTLFDGRPIESLSLIDAVMPDVVQTRQQAYRDKLAQQQAAAAAAAAAAASQQGSAKNGENTANGEENGAHTIANNHTDMMEVDGDVEIPPNKAVVLRGHESEVFICAWNPVSDLLASGSGDSTARIWNLSENSTSGSTQLVLRHCIREGGQDVPSNKDVTSLDWNSEGTLLATGSYDGFARIWTKDGNLASTLGQHKGPIFALKWNKKGNFILSAGVDKTTIIWDAHTGEAKQQFPFHSAPALDVDWQSNNTFASCSTDMCIHVCKLGQDRPIKTFQGHTNEVNAIKWDPTGNLLASCSDDMTLKIWSMKQDNCVHDLQAHNKEIYTIKWSPTGPGTNNPNANLMLASASFDSTVRLWDVDRGICIHTLTKHQEPVYSVAFSPDGRYLASGSFDKCVHIWNTQTGALVHSYRGTGGIFEVCWNAAGDKVGASASDGSVCVLDLRK</sequence>
<name>TBL1R_HUMAN</name>
<protein>
    <recommendedName>
        <fullName>F-box-like/WD repeat-containing protein TBL1XR1</fullName>
    </recommendedName>
    <alternativeName>
        <fullName>Nuclear receptor corepressor/HDAC3 complex subunit TBLR1</fullName>
    </alternativeName>
    <alternativeName>
        <fullName>TBL1-related protein 1</fullName>
    </alternativeName>
    <alternativeName>
        <fullName>Transducin beta-like 1X-related protein 1</fullName>
    </alternativeName>
</protein>
<proteinExistence type="evidence at protein level"/>